<reference key="1">
    <citation type="journal article" date="2002" name="Genome Res.">
        <title>A complete sequence of the T. tengcongensis genome.</title>
        <authorList>
            <person name="Bao Q."/>
            <person name="Tian Y."/>
            <person name="Li W."/>
            <person name="Xu Z."/>
            <person name="Xuan Z."/>
            <person name="Hu S."/>
            <person name="Dong W."/>
            <person name="Yang J."/>
            <person name="Chen Y."/>
            <person name="Xue Y."/>
            <person name="Xu Y."/>
            <person name="Lai X."/>
            <person name="Huang L."/>
            <person name="Dong X."/>
            <person name="Ma Y."/>
            <person name="Ling L."/>
            <person name="Tan H."/>
            <person name="Chen R."/>
            <person name="Wang J."/>
            <person name="Yu J."/>
            <person name="Yang H."/>
        </authorList>
    </citation>
    <scope>NUCLEOTIDE SEQUENCE [LARGE SCALE GENOMIC DNA]</scope>
    <source>
        <strain>DSM 15242 / JCM 11007 / NBRC 100824 / MB4</strain>
    </source>
</reference>
<comment type="function">
    <text evidence="1">An accessory protein needed during the final step in the assembly of 30S ribosomal subunit, possibly for assembly of the head region. Essential for efficient processing of 16S rRNA. May be needed both before and after RbfA during the maturation of 16S rRNA. It has affinity for free ribosomal 30S subunits but not for 70S ribosomes.</text>
</comment>
<comment type="subunit">
    <text evidence="1">Binds ribosomal protein uS19.</text>
</comment>
<comment type="subcellular location">
    <subcellularLocation>
        <location evidence="1">Cytoplasm</location>
    </subcellularLocation>
</comment>
<comment type="domain">
    <text evidence="1">The PRC barrel domain binds ribosomal protein uS19.</text>
</comment>
<comment type="similarity">
    <text evidence="1">Belongs to the RimM family.</text>
</comment>
<evidence type="ECO:0000255" key="1">
    <source>
        <dbReference type="HAMAP-Rule" id="MF_00014"/>
    </source>
</evidence>
<gene>
    <name evidence="1" type="primary">rimM</name>
    <name type="ordered locus">TTE1459</name>
</gene>
<accession>Q8R9X3</accession>
<name>RIMM_CALS4</name>
<keyword id="KW-0143">Chaperone</keyword>
<keyword id="KW-0963">Cytoplasm</keyword>
<keyword id="KW-1185">Reference proteome</keyword>
<keyword id="KW-0690">Ribosome biogenesis</keyword>
<keyword id="KW-0698">rRNA processing</keyword>
<protein>
    <recommendedName>
        <fullName evidence="1">Ribosome maturation factor RimM</fullName>
    </recommendedName>
</protein>
<sequence>MADYYNVGKVTSPHGIRGEIKVYPLTNVPERFYDIPYIWVFDEKDIPCKYEIENVKITSKGMVLLKLKGIDSRNDAEKLKGLFLKVDAENALKLEEDEYFITDLIGMKVYTEEGELIGTLEEVLQTGANDVYVVKAKEREVLLPAIKEVIKKVDVEGKVMIVRLLEGL</sequence>
<feature type="chain" id="PRO_0000163381" description="Ribosome maturation factor RimM">
    <location>
        <begin position="1"/>
        <end position="168"/>
    </location>
</feature>
<feature type="domain" description="PRC barrel" evidence="1">
    <location>
        <begin position="96"/>
        <end position="168"/>
    </location>
</feature>
<dbReference type="EMBL" id="AE008691">
    <property type="protein sequence ID" value="AAM24681.1"/>
    <property type="molecule type" value="Genomic_DNA"/>
</dbReference>
<dbReference type="RefSeq" id="WP_011025726.1">
    <property type="nucleotide sequence ID" value="NC_003869.1"/>
</dbReference>
<dbReference type="SMR" id="Q8R9X3"/>
<dbReference type="STRING" id="273068.TTE1459"/>
<dbReference type="KEGG" id="tte:TTE1459"/>
<dbReference type="eggNOG" id="COG0806">
    <property type="taxonomic scope" value="Bacteria"/>
</dbReference>
<dbReference type="HOGENOM" id="CLU_077636_3_2_9"/>
<dbReference type="OrthoDB" id="9810331at2"/>
<dbReference type="Proteomes" id="UP000000555">
    <property type="component" value="Chromosome"/>
</dbReference>
<dbReference type="GO" id="GO:0005737">
    <property type="term" value="C:cytoplasm"/>
    <property type="evidence" value="ECO:0007669"/>
    <property type="project" value="UniProtKB-SubCell"/>
</dbReference>
<dbReference type="GO" id="GO:0005840">
    <property type="term" value="C:ribosome"/>
    <property type="evidence" value="ECO:0007669"/>
    <property type="project" value="InterPro"/>
</dbReference>
<dbReference type="GO" id="GO:0043022">
    <property type="term" value="F:ribosome binding"/>
    <property type="evidence" value="ECO:0007669"/>
    <property type="project" value="InterPro"/>
</dbReference>
<dbReference type="GO" id="GO:0042274">
    <property type="term" value="P:ribosomal small subunit biogenesis"/>
    <property type="evidence" value="ECO:0007669"/>
    <property type="project" value="UniProtKB-UniRule"/>
</dbReference>
<dbReference type="GO" id="GO:0006364">
    <property type="term" value="P:rRNA processing"/>
    <property type="evidence" value="ECO:0007669"/>
    <property type="project" value="UniProtKB-UniRule"/>
</dbReference>
<dbReference type="Gene3D" id="2.30.30.240">
    <property type="entry name" value="PRC-barrel domain"/>
    <property type="match status" value="1"/>
</dbReference>
<dbReference type="Gene3D" id="2.40.30.60">
    <property type="entry name" value="RimM"/>
    <property type="match status" value="1"/>
</dbReference>
<dbReference type="HAMAP" id="MF_00014">
    <property type="entry name" value="Ribosome_mat_RimM"/>
    <property type="match status" value="1"/>
</dbReference>
<dbReference type="InterPro" id="IPR027275">
    <property type="entry name" value="PRC-brl_dom"/>
</dbReference>
<dbReference type="InterPro" id="IPR011033">
    <property type="entry name" value="PRC_barrel-like_sf"/>
</dbReference>
<dbReference type="InterPro" id="IPR011961">
    <property type="entry name" value="RimM"/>
</dbReference>
<dbReference type="InterPro" id="IPR002676">
    <property type="entry name" value="RimM_N"/>
</dbReference>
<dbReference type="InterPro" id="IPR036976">
    <property type="entry name" value="RimM_N_sf"/>
</dbReference>
<dbReference type="InterPro" id="IPR009000">
    <property type="entry name" value="Transl_B-barrel_sf"/>
</dbReference>
<dbReference type="NCBIfam" id="TIGR02273">
    <property type="entry name" value="16S_RimM"/>
    <property type="match status" value="1"/>
</dbReference>
<dbReference type="PANTHER" id="PTHR33692">
    <property type="entry name" value="RIBOSOME MATURATION FACTOR RIMM"/>
    <property type="match status" value="1"/>
</dbReference>
<dbReference type="PANTHER" id="PTHR33692:SF1">
    <property type="entry name" value="RIBOSOME MATURATION FACTOR RIMM"/>
    <property type="match status" value="1"/>
</dbReference>
<dbReference type="Pfam" id="PF05239">
    <property type="entry name" value="PRC"/>
    <property type="match status" value="1"/>
</dbReference>
<dbReference type="Pfam" id="PF01782">
    <property type="entry name" value="RimM"/>
    <property type="match status" value="1"/>
</dbReference>
<dbReference type="SUPFAM" id="SSF50346">
    <property type="entry name" value="PRC-barrel domain"/>
    <property type="match status" value="1"/>
</dbReference>
<dbReference type="SUPFAM" id="SSF50447">
    <property type="entry name" value="Translation proteins"/>
    <property type="match status" value="1"/>
</dbReference>
<proteinExistence type="inferred from homology"/>
<organism>
    <name type="scientific">Caldanaerobacter subterraneus subsp. tengcongensis (strain DSM 15242 / JCM 11007 / NBRC 100824 / MB4)</name>
    <name type="common">Thermoanaerobacter tengcongensis</name>
    <dbReference type="NCBI Taxonomy" id="273068"/>
    <lineage>
        <taxon>Bacteria</taxon>
        <taxon>Bacillati</taxon>
        <taxon>Bacillota</taxon>
        <taxon>Clostridia</taxon>
        <taxon>Thermoanaerobacterales</taxon>
        <taxon>Thermoanaerobacteraceae</taxon>
        <taxon>Caldanaerobacter</taxon>
    </lineage>
</organism>